<keyword id="KW-0413">Isomerase</keyword>
<keyword id="KW-0423">Lactose metabolism</keyword>
<proteinExistence type="inferred from homology"/>
<comment type="catalytic activity">
    <reaction evidence="1">
        <text>aldehydo-D-galactose 6-phosphate = keto-D-tagatose 6-phosphate</text>
        <dbReference type="Rhea" id="RHEA:13033"/>
        <dbReference type="ChEBI" id="CHEBI:58255"/>
        <dbReference type="ChEBI" id="CHEBI:134283"/>
        <dbReference type="EC" id="5.3.1.26"/>
    </reaction>
</comment>
<comment type="pathway">
    <text evidence="1">Carbohydrate metabolism; D-galactose 6-phosphate degradation; D-tagatose 6-phosphate from D-galactose 6-phosphate: step 1/1.</text>
</comment>
<comment type="subunit">
    <text evidence="1">Heteromultimeric protein consisting of LacA and LacB.</text>
</comment>
<comment type="similarity">
    <text evidence="1">Belongs to the LacAB/RpiB family.</text>
</comment>
<gene>
    <name evidence="1" type="primary">lacA</name>
    <name type="ordered locus">SPG_1088</name>
</gene>
<reference key="1">
    <citation type="journal article" date="2001" name="Microb. Drug Resist.">
        <title>Annotated draft genomic sequence from a Streptococcus pneumoniae type 19F clinical isolate.</title>
        <authorList>
            <person name="Dopazo J."/>
            <person name="Mendoza A."/>
            <person name="Herrero J."/>
            <person name="Caldara F."/>
            <person name="Humbert Y."/>
            <person name="Friedli L."/>
            <person name="Guerrier M."/>
            <person name="Grand-Schenk E."/>
            <person name="Gandin C."/>
            <person name="de Francesco M."/>
            <person name="Polissi A."/>
            <person name="Buell G."/>
            <person name="Feger G."/>
            <person name="Garcia E."/>
            <person name="Peitsch M."/>
            <person name="Garcia-Bustos J.F."/>
        </authorList>
    </citation>
    <scope>NUCLEOTIDE SEQUENCE [LARGE SCALE GENOMIC DNA]</scope>
    <source>
        <strain>G54</strain>
    </source>
</reference>
<reference key="2">
    <citation type="submission" date="2008-03" db="EMBL/GenBank/DDBJ databases">
        <title>Pneumococcal beta glucoside metabolism investigated by whole genome comparison.</title>
        <authorList>
            <person name="Mulas L."/>
            <person name="Trappetti C."/>
            <person name="Hakenbeck R."/>
            <person name="Iannelli F."/>
            <person name="Pozzi G."/>
            <person name="Davidsen T.M."/>
            <person name="Tettelin H."/>
            <person name="Oggioni M."/>
        </authorList>
    </citation>
    <scope>NUCLEOTIDE SEQUENCE [LARGE SCALE GENOMIC DNA]</scope>
    <source>
        <strain>G54</strain>
    </source>
</reference>
<organism>
    <name type="scientific">Streptococcus pneumoniae serotype 19F (strain G54)</name>
    <dbReference type="NCBI Taxonomy" id="512566"/>
    <lineage>
        <taxon>Bacteria</taxon>
        <taxon>Bacillati</taxon>
        <taxon>Bacillota</taxon>
        <taxon>Bacilli</taxon>
        <taxon>Lactobacillales</taxon>
        <taxon>Streptococcaceae</taxon>
        <taxon>Streptococcus</taxon>
    </lineage>
</organism>
<feature type="chain" id="PRO_1000147082" description="Galactose-6-phosphate isomerase subunit LacA">
    <location>
        <begin position="1"/>
        <end position="141"/>
    </location>
</feature>
<accession>B5E4T2</accession>
<name>LACA_STRP4</name>
<dbReference type="EC" id="5.3.1.26" evidence="1"/>
<dbReference type="EMBL" id="CP001015">
    <property type="protein sequence ID" value="ACF56505.1"/>
    <property type="molecule type" value="Genomic_DNA"/>
</dbReference>
<dbReference type="SMR" id="B5E4T2"/>
<dbReference type="KEGG" id="spx:SPG_1088"/>
<dbReference type="HOGENOM" id="CLU_091396_4_2_9"/>
<dbReference type="UniPathway" id="UPA00702">
    <property type="reaction ID" value="UER00714"/>
</dbReference>
<dbReference type="GO" id="GO:0050044">
    <property type="term" value="F:galactose-6-phosphate isomerase activity"/>
    <property type="evidence" value="ECO:0007669"/>
    <property type="project" value="UniProtKB-UniRule"/>
</dbReference>
<dbReference type="GO" id="GO:0004751">
    <property type="term" value="F:ribose-5-phosphate isomerase activity"/>
    <property type="evidence" value="ECO:0007669"/>
    <property type="project" value="TreeGrafter"/>
</dbReference>
<dbReference type="GO" id="GO:0019316">
    <property type="term" value="P:D-allose catabolic process"/>
    <property type="evidence" value="ECO:0007669"/>
    <property type="project" value="TreeGrafter"/>
</dbReference>
<dbReference type="GO" id="GO:0019388">
    <property type="term" value="P:galactose catabolic process"/>
    <property type="evidence" value="ECO:0007669"/>
    <property type="project" value="UniProtKB-UniPathway"/>
</dbReference>
<dbReference type="GO" id="GO:0019512">
    <property type="term" value="P:lactose catabolic process via tagatose-6-phosphate"/>
    <property type="evidence" value="ECO:0007669"/>
    <property type="project" value="UniProtKB-UniRule"/>
</dbReference>
<dbReference type="GO" id="GO:0009052">
    <property type="term" value="P:pentose-phosphate shunt, non-oxidative branch"/>
    <property type="evidence" value="ECO:0007669"/>
    <property type="project" value="TreeGrafter"/>
</dbReference>
<dbReference type="Gene3D" id="3.40.1400.10">
    <property type="entry name" value="Sugar-phosphate isomerase, RpiB/LacA/LacB"/>
    <property type="match status" value="1"/>
</dbReference>
<dbReference type="HAMAP" id="MF_01555">
    <property type="entry name" value="LacA"/>
    <property type="match status" value="1"/>
</dbReference>
<dbReference type="InterPro" id="IPR004783">
    <property type="entry name" value="LacA"/>
</dbReference>
<dbReference type="InterPro" id="IPR003500">
    <property type="entry name" value="RpiB_LacA_LacB"/>
</dbReference>
<dbReference type="InterPro" id="IPR036569">
    <property type="entry name" value="RpiB_LacA_LacB_sf"/>
</dbReference>
<dbReference type="NCBIfam" id="TIGR01118">
    <property type="entry name" value="lacA"/>
    <property type="match status" value="1"/>
</dbReference>
<dbReference type="NCBIfam" id="NF006380">
    <property type="entry name" value="PRK08621.1"/>
    <property type="match status" value="1"/>
</dbReference>
<dbReference type="NCBIfam" id="NF009257">
    <property type="entry name" value="PRK12613.1"/>
    <property type="match status" value="1"/>
</dbReference>
<dbReference type="NCBIfam" id="TIGR00689">
    <property type="entry name" value="rpiB_lacA_lacB"/>
    <property type="match status" value="1"/>
</dbReference>
<dbReference type="PANTHER" id="PTHR30345:SF5">
    <property type="entry name" value="GALACTOSE-6-PHOSPHATE ISOMERASE SUBUNIT LACA"/>
    <property type="match status" value="1"/>
</dbReference>
<dbReference type="PANTHER" id="PTHR30345">
    <property type="entry name" value="RIBOSE-5-PHOSPHATE ISOMERASE B"/>
    <property type="match status" value="1"/>
</dbReference>
<dbReference type="Pfam" id="PF02502">
    <property type="entry name" value="LacAB_rpiB"/>
    <property type="match status" value="1"/>
</dbReference>
<dbReference type="PIRSF" id="PIRSF005384">
    <property type="entry name" value="RpiB_LacA_B"/>
    <property type="match status" value="1"/>
</dbReference>
<dbReference type="SUPFAM" id="SSF89623">
    <property type="entry name" value="Ribose/Galactose isomerase RpiB/AlsB"/>
    <property type="match status" value="1"/>
</dbReference>
<evidence type="ECO:0000255" key="1">
    <source>
        <dbReference type="HAMAP-Rule" id="MF_01555"/>
    </source>
</evidence>
<sequence length="141" mass="15244">MSIVIGADAAGLRLKEVVKDFLEKENFHLVDVTAEGQDFVDVTLAVAAEVNKEEQNLGIVIDAYGAGPFMVATKIKGMVAAEVSDERSAYMTRGHNNSRMITMGAQLVGDELAKNIAKGFVNGKYDGGRHQIRVDMLNKMG</sequence>
<protein>
    <recommendedName>
        <fullName evidence="1">Galactose-6-phosphate isomerase subunit LacA</fullName>
        <ecNumber evidence="1">5.3.1.26</ecNumber>
    </recommendedName>
</protein>